<sequence>MTNKTYKIAVLPGDGIGPEVMEQAHKVLDAIEKKHAISFSREQHDVGGIAIDNHGCPLPESTVKGCEESDAVLFGSVGGPKWEHLPPNDQPERGALLPLRKHFQLFCNLRPAQIHKGLENFSPLRADISERGFDIVVVRELTGGIYFGQPKGREGEGPQEKAYDTEIYHRYEIERIAKIAFESARLRNKNVYSIDKANVLQSSILWREVVEEVAKGYPDVTLNHMYIDNATMQLIKDPSQFDVMLCSNIFGDIISDECAMITGSMGMLPSASLNESNFGLYEPAGGSAPDIAGKNIANPVAQILSAALMLRYSLGEEEAAQSIEAAVSKALSAGELTADLAGDKPALTTSAMGDKIAEYILNS</sequence>
<keyword id="KW-0028">Amino-acid biosynthesis</keyword>
<keyword id="KW-0100">Branched-chain amino acid biosynthesis</keyword>
<keyword id="KW-0963">Cytoplasm</keyword>
<keyword id="KW-0432">Leucine biosynthesis</keyword>
<keyword id="KW-0460">Magnesium</keyword>
<keyword id="KW-0464">Manganese</keyword>
<keyword id="KW-0479">Metal-binding</keyword>
<keyword id="KW-0520">NAD</keyword>
<keyword id="KW-0560">Oxidoreductase</keyword>
<keyword id="KW-1185">Reference proteome</keyword>
<protein>
    <recommendedName>
        <fullName evidence="1">3-isopropylmalate dehydrogenase</fullName>
        <ecNumber evidence="1">1.1.1.85</ecNumber>
    </recommendedName>
    <alternativeName>
        <fullName evidence="1">3-IPM-DH</fullName>
    </alternativeName>
    <alternativeName>
        <fullName evidence="1">Beta-IPM dehydrogenase</fullName>
        <shortName evidence="1">IMDH</shortName>
    </alternativeName>
</protein>
<name>LEU3_ALIF1</name>
<accession>Q5E857</accession>
<dbReference type="EC" id="1.1.1.85" evidence="1"/>
<dbReference type="EMBL" id="CP000020">
    <property type="protein sequence ID" value="AAW84789.1"/>
    <property type="molecule type" value="Genomic_DNA"/>
</dbReference>
<dbReference type="RefSeq" id="WP_005417339.1">
    <property type="nucleotide sequence ID" value="NZ_CAWLES010000001.1"/>
</dbReference>
<dbReference type="RefSeq" id="YP_203677.1">
    <property type="nucleotide sequence ID" value="NC_006840.2"/>
</dbReference>
<dbReference type="SMR" id="Q5E857"/>
<dbReference type="STRING" id="312309.VF_0294"/>
<dbReference type="EnsemblBacteria" id="AAW84789">
    <property type="protein sequence ID" value="AAW84789"/>
    <property type="gene ID" value="VF_0294"/>
</dbReference>
<dbReference type="GeneID" id="54162914"/>
<dbReference type="KEGG" id="vfi:VF_0294"/>
<dbReference type="PATRIC" id="fig|312309.11.peg.288"/>
<dbReference type="eggNOG" id="COG0473">
    <property type="taxonomic scope" value="Bacteria"/>
</dbReference>
<dbReference type="HOGENOM" id="CLU_031953_0_3_6"/>
<dbReference type="OrthoDB" id="9767905at2"/>
<dbReference type="UniPathway" id="UPA00048">
    <property type="reaction ID" value="UER00072"/>
</dbReference>
<dbReference type="Proteomes" id="UP000000537">
    <property type="component" value="Chromosome I"/>
</dbReference>
<dbReference type="GO" id="GO:0005829">
    <property type="term" value="C:cytosol"/>
    <property type="evidence" value="ECO:0007669"/>
    <property type="project" value="TreeGrafter"/>
</dbReference>
<dbReference type="GO" id="GO:0003862">
    <property type="term" value="F:3-isopropylmalate dehydrogenase activity"/>
    <property type="evidence" value="ECO:0007669"/>
    <property type="project" value="UniProtKB-UniRule"/>
</dbReference>
<dbReference type="GO" id="GO:0000287">
    <property type="term" value="F:magnesium ion binding"/>
    <property type="evidence" value="ECO:0007669"/>
    <property type="project" value="InterPro"/>
</dbReference>
<dbReference type="GO" id="GO:0051287">
    <property type="term" value="F:NAD binding"/>
    <property type="evidence" value="ECO:0007669"/>
    <property type="project" value="InterPro"/>
</dbReference>
<dbReference type="GO" id="GO:0009098">
    <property type="term" value="P:L-leucine biosynthetic process"/>
    <property type="evidence" value="ECO:0007669"/>
    <property type="project" value="UniProtKB-UniRule"/>
</dbReference>
<dbReference type="FunFam" id="3.40.718.10:FF:000004">
    <property type="entry name" value="3-isopropylmalate dehydrogenase"/>
    <property type="match status" value="1"/>
</dbReference>
<dbReference type="Gene3D" id="3.40.718.10">
    <property type="entry name" value="Isopropylmalate Dehydrogenase"/>
    <property type="match status" value="1"/>
</dbReference>
<dbReference type="HAMAP" id="MF_01033">
    <property type="entry name" value="LeuB_type1"/>
    <property type="match status" value="1"/>
</dbReference>
<dbReference type="InterPro" id="IPR019818">
    <property type="entry name" value="IsoCit/isopropylmalate_DH_CS"/>
</dbReference>
<dbReference type="InterPro" id="IPR024084">
    <property type="entry name" value="IsoPropMal-DH-like_dom"/>
</dbReference>
<dbReference type="InterPro" id="IPR004429">
    <property type="entry name" value="Isopropylmalate_DH"/>
</dbReference>
<dbReference type="NCBIfam" id="TIGR00169">
    <property type="entry name" value="leuB"/>
    <property type="match status" value="1"/>
</dbReference>
<dbReference type="PANTHER" id="PTHR42979">
    <property type="entry name" value="3-ISOPROPYLMALATE DEHYDROGENASE"/>
    <property type="match status" value="1"/>
</dbReference>
<dbReference type="PANTHER" id="PTHR42979:SF1">
    <property type="entry name" value="3-ISOPROPYLMALATE DEHYDROGENASE"/>
    <property type="match status" value="1"/>
</dbReference>
<dbReference type="Pfam" id="PF00180">
    <property type="entry name" value="Iso_dh"/>
    <property type="match status" value="1"/>
</dbReference>
<dbReference type="SMART" id="SM01329">
    <property type="entry name" value="Iso_dh"/>
    <property type="match status" value="1"/>
</dbReference>
<dbReference type="SUPFAM" id="SSF53659">
    <property type="entry name" value="Isocitrate/Isopropylmalate dehydrogenase-like"/>
    <property type="match status" value="1"/>
</dbReference>
<dbReference type="PROSITE" id="PS00470">
    <property type="entry name" value="IDH_IMDH"/>
    <property type="match status" value="1"/>
</dbReference>
<evidence type="ECO:0000255" key="1">
    <source>
        <dbReference type="HAMAP-Rule" id="MF_01033"/>
    </source>
</evidence>
<comment type="function">
    <text evidence="1">Catalyzes the oxidation of 3-carboxy-2-hydroxy-4-methylpentanoate (3-isopropylmalate) to 3-carboxy-4-methyl-2-oxopentanoate. The product decarboxylates to 4-methyl-2 oxopentanoate.</text>
</comment>
<comment type="catalytic activity">
    <reaction evidence="1">
        <text>(2R,3S)-3-isopropylmalate + NAD(+) = 4-methyl-2-oxopentanoate + CO2 + NADH</text>
        <dbReference type="Rhea" id="RHEA:32271"/>
        <dbReference type="ChEBI" id="CHEBI:16526"/>
        <dbReference type="ChEBI" id="CHEBI:17865"/>
        <dbReference type="ChEBI" id="CHEBI:35121"/>
        <dbReference type="ChEBI" id="CHEBI:57540"/>
        <dbReference type="ChEBI" id="CHEBI:57945"/>
        <dbReference type="EC" id="1.1.1.85"/>
    </reaction>
</comment>
<comment type="cofactor">
    <cofactor evidence="1">
        <name>Mg(2+)</name>
        <dbReference type="ChEBI" id="CHEBI:18420"/>
    </cofactor>
    <cofactor evidence="1">
        <name>Mn(2+)</name>
        <dbReference type="ChEBI" id="CHEBI:29035"/>
    </cofactor>
    <text evidence="1">Binds 1 Mg(2+) or Mn(2+) ion per subunit.</text>
</comment>
<comment type="pathway">
    <text evidence="1">Amino-acid biosynthesis; L-leucine biosynthesis; L-leucine from 3-methyl-2-oxobutanoate: step 3/4.</text>
</comment>
<comment type="subunit">
    <text evidence="1">Homodimer.</text>
</comment>
<comment type="subcellular location">
    <subcellularLocation>
        <location evidence="1">Cytoplasm</location>
    </subcellularLocation>
</comment>
<comment type="similarity">
    <text evidence="1">Belongs to the isocitrate and isopropylmalate dehydrogenases family. LeuB type 1 subfamily.</text>
</comment>
<gene>
    <name evidence="1" type="primary">leuB</name>
    <name type="ordered locus">VF_0294</name>
</gene>
<feature type="chain" id="PRO_0000083779" description="3-isopropylmalate dehydrogenase">
    <location>
        <begin position="1"/>
        <end position="363"/>
    </location>
</feature>
<feature type="binding site" evidence="1">
    <location>
        <begin position="79"/>
        <end position="92"/>
    </location>
    <ligand>
        <name>NAD(+)</name>
        <dbReference type="ChEBI" id="CHEBI:57540"/>
    </ligand>
</feature>
<feature type="binding site" evidence="1">
    <location>
        <position position="100"/>
    </location>
    <ligand>
        <name>substrate</name>
    </ligand>
</feature>
<feature type="binding site" evidence="1">
    <location>
        <position position="110"/>
    </location>
    <ligand>
        <name>substrate</name>
    </ligand>
</feature>
<feature type="binding site" evidence="1">
    <location>
        <position position="139"/>
    </location>
    <ligand>
        <name>substrate</name>
    </ligand>
</feature>
<feature type="binding site" evidence="1">
    <location>
        <position position="228"/>
    </location>
    <ligand>
        <name>Mg(2+)</name>
        <dbReference type="ChEBI" id="CHEBI:18420"/>
    </ligand>
</feature>
<feature type="binding site" evidence="1">
    <location>
        <position position="228"/>
    </location>
    <ligand>
        <name>substrate</name>
    </ligand>
</feature>
<feature type="binding site" evidence="1">
    <location>
        <position position="252"/>
    </location>
    <ligand>
        <name>Mg(2+)</name>
        <dbReference type="ChEBI" id="CHEBI:18420"/>
    </ligand>
</feature>
<feature type="binding site" evidence="1">
    <location>
        <position position="256"/>
    </location>
    <ligand>
        <name>Mg(2+)</name>
        <dbReference type="ChEBI" id="CHEBI:18420"/>
    </ligand>
</feature>
<feature type="binding site" evidence="1">
    <location>
        <begin position="286"/>
        <end position="298"/>
    </location>
    <ligand>
        <name>NAD(+)</name>
        <dbReference type="ChEBI" id="CHEBI:57540"/>
    </ligand>
</feature>
<feature type="site" description="Important for catalysis" evidence="1">
    <location>
        <position position="146"/>
    </location>
</feature>
<feature type="site" description="Important for catalysis" evidence="1">
    <location>
        <position position="196"/>
    </location>
</feature>
<proteinExistence type="inferred from homology"/>
<reference key="1">
    <citation type="journal article" date="2005" name="Proc. Natl. Acad. Sci. U.S.A.">
        <title>Complete genome sequence of Vibrio fischeri: a symbiotic bacterium with pathogenic congeners.</title>
        <authorList>
            <person name="Ruby E.G."/>
            <person name="Urbanowski M."/>
            <person name="Campbell J."/>
            <person name="Dunn A."/>
            <person name="Faini M."/>
            <person name="Gunsalus R."/>
            <person name="Lostroh P."/>
            <person name="Lupp C."/>
            <person name="McCann J."/>
            <person name="Millikan D."/>
            <person name="Schaefer A."/>
            <person name="Stabb E."/>
            <person name="Stevens A."/>
            <person name="Visick K."/>
            <person name="Whistler C."/>
            <person name="Greenberg E.P."/>
        </authorList>
    </citation>
    <scope>NUCLEOTIDE SEQUENCE [LARGE SCALE GENOMIC DNA]</scope>
    <source>
        <strain>ATCC 700601 / ES114</strain>
    </source>
</reference>
<organism>
    <name type="scientific">Aliivibrio fischeri (strain ATCC 700601 / ES114)</name>
    <name type="common">Vibrio fischeri</name>
    <dbReference type="NCBI Taxonomy" id="312309"/>
    <lineage>
        <taxon>Bacteria</taxon>
        <taxon>Pseudomonadati</taxon>
        <taxon>Pseudomonadota</taxon>
        <taxon>Gammaproteobacteria</taxon>
        <taxon>Vibrionales</taxon>
        <taxon>Vibrionaceae</taxon>
        <taxon>Aliivibrio</taxon>
    </lineage>
</organism>